<feature type="signal peptide" evidence="1">
    <location>
        <begin position="1"/>
        <end position="20"/>
    </location>
</feature>
<feature type="chain" id="PRO_0000018782" description="Beta-2-microglobulin">
    <location>
        <begin position="21"/>
        <end position="119"/>
    </location>
</feature>
<feature type="domain" description="Ig-like C1-type">
    <location>
        <begin position="25"/>
        <end position="114"/>
    </location>
</feature>
<feature type="disulfide bond" evidence="2">
    <location>
        <begin position="45"/>
        <end position="100"/>
    </location>
</feature>
<dbReference type="EMBL" id="AF032036">
    <property type="protein sequence ID" value="AAC52111.1"/>
    <property type="molecule type" value="Genomic_DNA"/>
</dbReference>
<dbReference type="EMBL" id="AF032035">
    <property type="protein sequence ID" value="AAC52111.1"/>
    <property type="status" value="JOINED"/>
    <property type="molecule type" value="Genomic_DNA"/>
</dbReference>
<dbReference type="BMRB" id="O77519"/>
<dbReference type="SMR" id="O77519"/>
<dbReference type="GO" id="GO:0005576">
    <property type="term" value="C:extracellular region"/>
    <property type="evidence" value="ECO:0007669"/>
    <property type="project" value="UniProtKB-SubCell"/>
</dbReference>
<dbReference type="GO" id="GO:0042612">
    <property type="term" value="C:MHC class I protein complex"/>
    <property type="evidence" value="ECO:0007669"/>
    <property type="project" value="UniProtKB-KW"/>
</dbReference>
<dbReference type="GO" id="GO:0002474">
    <property type="term" value="P:antigen processing and presentation of peptide antigen via MHC class I"/>
    <property type="evidence" value="ECO:0007669"/>
    <property type="project" value="UniProtKB-KW"/>
</dbReference>
<dbReference type="GO" id="GO:0006955">
    <property type="term" value="P:immune response"/>
    <property type="evidence" value="ECO:0007669"/>
    <property type="project" value="InterPro"/>
</dbReference>
<dbReference type="CDD" id="cd05770">
    <property type="entry name" value="IgC1_beta2m"/>
    <property type="match status" value="1"/>
</dbReference>
<dbReference type="FunFam" id="2.60.40.10:FF:001005">
    <property type="entry name" value="Beta-2-microglobulin"/>
    <property type="match status" value="1"/>
</dbReference>
<dbReference type="Gene3D" id="2.60.40.10">
    <property type="entry name" value="Immunoglobulins"/>
    <property type="match status" value="1"/>
</dbReference>
<dbReference type="InterPro" id="IPR015707">
    <property type="entry name" value="B2Microglobulin"/>
</dbReference>
<dbReference type="InterPro" id="IPR007110">
    <property type="entry name" value="Ig-like_dom"/>
</dbReference>
<dbReference type="InterPro" id="IPR036179">
    <property type="entry name" value="Ig-like_dom_sf"/>
</dbReference>
<dbReference type="InterPro" id="IPR013783">
    <property type="entry name" value="Ig-like_fold"/>
</dbReference>
<dbReference type="InterPro" id="IPR003006">
    <property type="entry name" value="Ig/MHC_CS"/>
</dbReference>
<dbReference type="InterPro" id="IPR003597">
    <property type="entry name" value="Ig_C1-set"/>
</dbReference>
<dbReference type="InterPro" id="IPR050160">
    <property type="entry name" value="MHC/Immunoglobulin"/>
</dbReference>
<dbReference type="PANTHER" id="PTHR19944:SF62">
    <property type="entry name" value="BETA-2-MICROGLOBULIN"/>
    <property type="match status" value="1"/>
</dbReference>
<dbReference type="PANTHER" id="PTHR19944">
    <property type="entry name" value="MHC CLASS II-RELATED"/>
    <property type="match status" value="1"/>
</dbReference>
<dbReference type="Pfam" id="PF07654">
    <property type="entry name" value="C1-set"/>
    <property type="match status" value="1"/>
</dbReference>
<dbReference type="SMART" id="SM00407">
    <property type="entry name" value="IGc1"/>
    <property type="match status" value="1"/>
</dbReference>
<dbReference type="SUPFAM" id="SSF48726">
    <property type="entry name" value="Immunoglobulin"/>
    <property type="match status" value="1"/>
</dbReference>
<dbReference type="PROSITE" id="PS50835">
    <property type="entry name" value="IG_LIKE"/>
    <property type="match status" value="1"/>
</dbReference>
<dbReference type="PROSITE" id="PS00290">
    <property type="entry name" value="IG_MHC"/>
    <property type="match status" value="1"/>
</dbReference>
<accession>O77519</accession>
<protein>
    <recommendedName>
        <fullName>Beta-2-microglobulin</fullName>
    </recommendedName>
</protein>
<name>B2MG_LEOCH</name>
<keyword id="KW-1015">Disulfide bond</keyword>
<keyword id="KW-0391">Immunity</keyword>
<keyword id="KW-0393">Immunoglobulin domain</keyword>
<keyword id="KW-0490">MHC I</keyword>
<keyword id="KW-0964">Secreted</keyword>
<keyword id="KW-0732">Signal</keyword>
<sequence length="119" mass="13656">MACFVVVALLVLLSLSGLEAIQHAPKIQVYSRHPAENGKPNFLNCYVSGFHPSDIEVDLLKNGKKIEKVEHSDLSFSKDWSFYLLYYTEFTPNEKDEYACRVSHVTFSTPKTVKWDRNL</sequence>
<evidence type="ECO:0000250" key="1"/>
<evidence type="ECO:0000255" key="2">
    <source>
        <dbReference type="PROSITE-ProRule" id="PRU00114"/>
    </source>
</evidence>
<evidence type="ECO:0000305" key="3"/>
<gene>
    <name type="primary">B2M</name>
</gene>
<proteinExistence type="inferred from homology"/>
<reference key="1">
    <citation type="journal article" date="1998" name="Immunogenetics">
        <title>Beta-2-microglobulin in neotropical primates (Platyrrhini).</title>
        <authorList>
            <person name="Canavez F.C."/>
            <person name="Ladasky J.J."/>
            <person name="Muniz J.A.P.C."/>
            <person name="Seuanez H.N."/>
            <person name="Parham P."/>
        </authorList>
    </citation>
    <scope>NUCLEOTIDE SEQUENCE [GENOMIC DNA]</scope>
    <source>
        <tissue>Blood</tissue>
    </source>
</reference>
<organism>
    <name type="scientific">Leontopithecus chrysopygus</name>
    <name type="common">Golden-rumped lion tamarin</name>
    <name type="synonym">Leontopithecus rosalia chrysopygus</name>
    <dbReference type="NCBI Taxonomy" id="58710"/>
    <lineage>
        <taxon>Eukaryota</taxon>
        <taxon>Metazoa</taxon>
        <taxon>Chordata</taxon>
        <taxon>Craniata</taxon>
        <taxon>Vertebrata</taxon>
        <taxon>Euteleostomi</taxon>
        <taxon>Mammalia</taxon>
        <taxon>Eutheria</taxon>
        <taxon>Euarchontoglires</taxon>
        <taxon>Primates</taxon>
        <taxon>Haplorrhini</taxon>
        <taxon>Platyrrhini</taxon>
        <taxon>Cebidae</taxon>
        <taxon>Callitrichinae</taxon>
        <taxon>Leontopithecus</taxon>
    </lineage>
</organism>
<comment type="function">
    <text evidence="1">Component of the class I major histocompatibility complex (MHC). Involved in the presentation of peptide antigens to the immune system (By similarity).</text>
</comment>
<comment type="subunit">
    <text evidence="1">Heterodimer of an alpha chain and a beta chain. Beta-2-microglobulin is the beta-chain of major histocompatibility complex class I molecules (By similarity).</text>
</comment>
<comment type="subcellular location">
    <subcellularLocation>
        <location evidence="1">Secreted</location>
    </subcellularLocation>
</comment>
<comment type="similarity">
    <text evidence="3">Belongs to the beta-2-microglobulin family.</text>
</comment>